<evidence type="ECO:0000255" key="1">
    <source>
        <dbReference type="HAMAP-Rule" id="MF_00017"/>
    </source>
</evidence>
<accession>B7JC18</accession>
<gene>
    <name evidence="1" type="primary">recR</name>
    <name type="ordered locus">AFE_1921</name>
</gene>
<proteinExistence type="inferred from homology"/>
<dbReference type="EMBL" id="CP001219">
    <property type="protein sequence ID" value="ACK80247.1"/>
    <property type="molecule type" value="Genomic_DNA"/>
</dbReference>
<dbReference type="RefSeq" id="WP_012536838.1">
    <property type="nucleotide sequence ID" value="NC_011761.1"/>
</dbReference>
<dbReference type="SMR" id="B7JC18"/>
<dbReference type="STRING" id="243159.AFE_1921"/>
<dbReference type="PaxDb" id="243159-AFE_1921"/>
<dbReference type="GeneID" id="65281074"/>
<dbReference type="KEGG" id="afr:AFE_1921"/>
<dbReference type="eggNOG" id="COG0353">
    <property type="taxonomic scope" value="Bacteria"/>
</dbReference>
<dbReference type="HOGENOM" id="CLU_060739_1_0_6"/>
<dbReference type="Proteomes" id="UP000001362">
    <property type="component" value="Chromosome"/>
</dbReference>
<dbReference type="GO" id="GO:0003677">
    <property type="term" value="F:DNA binding"/>
    <property type="evidence" value="ECO:0007669"/>
    <property type="project" value="UniProtKB-UniRule"/>
</dbReference>
<dbReference type="GO" id="GO:0008270">
    <property type="term" value="F:zinc ion binding"/>
    <property type="evidence" value="ECO:0007669"/>
    <property type="project" value="UniProtKB-KW"/>
</dbReference>
<dbReference type="GO" id="GO:0006310">
    <property type="term" value="P:DNA recombination"/>
    <property type="evidence" value="ECO:0007669"/>
    <property type="project" value="UniProtKB-UniRule"/>
</dbReference>
<dbReference type="GO" id="GO:0006281">
    <property type="term" value="P:DNA repair"/>
    <property type="evidence" value="ECO:0007669"/>
    <property type="project" value="UniProtKB-UniRule"/>
</dbReference>
<dbReference type="CDD" id="cd01025">
    <property type="entry name" value="TOPRIM_recR"/>
    <property type="match status" value="1"/>
</dbReference>
<dbReference type="Gene3D" id="3.40.1360.10">
    <property type="match status" value="1"/>
</dbReference>
<dbReference type="Gene3D" id="6.10.250.240">
    <property type="match status" value="1"/>
</dbReference>
<dbReference type="Gene3D" id="1.10.8.420">
    <property type="entry name" value="RecR Domain 1"/>
    <property type="match status" value="1"/>
</dbReference>
<dbReference type="HAMAP" id="MF_00017">
    <property type="entry name" value="RecR"/>
    <property type="match status" value="1"/>
</dbReference>
<dbReference type="InterPro" id="IPR000093">
    <property type="entry name" value="DNA_Rcmb_RecR"/>
</dbReference>
<dbReference type="InterPro" id="IPR023627">
    <property type="entry name" value="Rcmb_RecR"/>
</dbReference>
<dbReference type="InterPro" id="IPR015967">
    <property type="entry name" value="Rcmb_RecR_Znf"/>
</dbReference>
<dbReference type="InterPro" id="IPR006171">
    <property type="entry name" value="TOPRIM_dom"/>
</dbReference>
<dbReference type="InterPro" id="IPR034137">
    <property type="entry name" value="TOPRIM_RecR"/>
</dbReference>
<dbReference type="NCBIfam" id="TIGR00615">
    <property type="entry name" value="recR"/>
    <property type="match status" value="1"/>
</dbReference>
<dbReference type="PANTHER" id="PTHR30446">
    <property type="entry name" value="RECOMBINATION PROTEIN RECR"/>
    <property type="match status" value="1"/>
</dbReference>
<dbReference type="PANTHER" id="PTHR30446:SF0">
    <property type="entry name" value="RECOMBINATION PROTEIN RECR"/>
    <property type="match status" value="1"/>
</dbReference>
<dbReference type="Pfam" id="PF21175">
    <property type="entry name" value="RecR_C"/>
    <property type="match status" value="1"/>
</dbReference>
<dbReference type="Pfam" id="PF21176">
    <property type="entry name" value="RecR_HhH"/>
    <property type="match status" value="1"/>
</dbReference>
<dbReference type="Pfam" id="PF02132">
    <property type="entry name" value="RecR_ZnF"/>
    <property type="match status" value="1"/>
</dbReference>
<dbReference type="Pfam" id="PF13662">
    <property type="entry name" value="Toprim_4"/>
    <property type="match status" value="1"/>
</dbReference>
<dbReference type="SMART" id="SM00493">
    <property type="entry name" value="TOPRIM"/>
    <property type="match status" value="1"/>
</dbReference>
<dbReference type="SUPFAM" id="SSF111304">
    <property type="entry name" value="Recombination protein RecR"/>
    <property type="match status" value="1"/>
</dbReference>
<dbReference type="PROSITE" id="PS01300">
    <property type="entry name" value="RECR"/>
    <property type="match status" value="1"/>
</dbReference>
<dbReference type="PROSITE" id="PS50880">
    <property type="entry name" value="TOPRIM"/>
    <property type="match status" value="1"/>
</dbReference>
<keyword id="KW-0227">DNA damage</keyword>
<keyword id="KW-0233">DNA recombination</keyword>
<keyword id="KW-0234">DNA repair</keyword>
<keyword id="KW-0479">Metal-binding</keyword>
<keyword id="KW-1185">Reference proteome</keyword>
<keyword id="KW-0862">Zinc</keyword>
<keyword id="KW-0863">Zinc-finger</keyword>
<name>RECR_ACIF2</name>
<protein>
    <recommendedName>
        <fullName evidence="1">Recombination protein RecR</fullName>
    </recommendedName>
</protein>
<reference key="1">
    <citation type="journal article" date="2008" name="BMC Genomics">
        <title>Acidithiobacillus ferrooxidans metabolism: from genome sequence to industrial applications.</title>
        <authorList>
            <person name="Valdes J."/>
            <person name="Pedroso I."/>
            <person name="Quatrini R."/>
            <person name="Dodson R.J."/>
            <person name="Tettelin H."/>
            <person name="Blake R. II"/>
            <person name="Eisen J.A."/>
            <person name="Holmes D.S."/>
        </authorList>
    </citation>
    <scope>NUCLEOTIDE SEQUENCE [LARGE SCALE GENOMIC DNA]</scope>
    <source>
        <strain>ATCC 23270 / DSM 14882 / CIP 104768 / NCIMB 8455</strain>
    </source>
</reference>
<feature type="chain" id="PRO_1000195358" description="Recombination protein RecR">
    <location>
        <begin position="1"/>
        <end position="199"/>
    </location>
</feature>
<feature type="domain" description="Toprim" evidence="1">
    <location>
        <begin position="80"/>
        <end position="174"/>
    </location>
</feature>
<feature type="zinc finger region" description="C4-type" evidence="1">
    <location>
        <begin position="57"/>
        <end position="72"/>
    </location>
</feature>
<comment type="function">
    <text evidence="1">May play a role in DNA repair. It seems to be involved in an RecBC-independent recombinational process of DNA repair. It may act with RecF and RecO.</text>
</comment>
<comment type="similarity">
    <text evidence="1">Belongs to the RecR family.</text>
</comment>
<organism>
    <name type="scientific">Acidithiobacillus ferrooxidans (strain ATCC 23270 / DSM 14882 / CIP 104768 / NCIMB 8455)</name>
    <name type="common">Ferrobacillus ferrooxidans (strain ATCC 23270)</name>
    <dbReference type="NCBI Taxonomy" id="243159"/>
    <lineage>
        <taxon>Bacteria</taxon>
        <taxon>Pseudomonadati</taxon>
        <taxon>Pseudomonadota</taxon>
        <taxon>Acidithiobacillia</taxon>
        <taxon>Acidithiobacillales</taxon>
        <taxon>Acidithiobacillaceae</taxon>
        <taxon>Acidithiobacillus</taxon>
    </lineage>
</organism>
<sequence>MADVPSMDALVALLRRLPGIGPRSAQRISYELLVRKRDLMPQLAAAFQQAHAVVRFCERCNNLSEAPLCAVCRSEHRDRSILCVVESPADLRAIEDTGVFVGEFFVLMGHLSPLDGIGPEALHIDRLSARLGETDLQEVIFATNPTLEGEATAQFLAGLVPDGVTISRIARGVPVGGELEYVDRSTLGRALHGRRLLDE</sequence>